<feature type="chain" id="PRO_0000128527" description="Large ribosomal subunit protein uL14">
    <location>
        <begin position="1"/>
        <end position="121"/>
    </location>
</feature>
<sequence>MIQRQTYLNVADNSGAKKVQVIGIPYAPRKYATLRDVVTVTVKEALPQGNAKKGKIYRAIIVRTAKEVRRPDGSYIKFDDNACVLLNQYGEPLGTRVLGPIAREVRNKGFTKIASLAPEVV</sequence>
<organism>
    <name type="scientific">Aquifex pyrophilus</name>
    <dbReference type="NCBI Taxonomy" id="2714"/>
    <lineage>
        <taxon>Bacteria</taxon>
        <taxon>Pseudomonadati</taxon>
        <taxon>Aquificota</taxon>
        <taxon>Aquificia</taxon>
        <taxon>Aquificales</taxon>
        <taxon>Aquificaceae</taxon>
        <taxon>Aquifex</taxon>
    </lineage>
</organism>
<keyword id="KW-0687">Ribonucleoprotein</keyword>
<keyword id="KW-0689">Ribosomal protein</keyword>
<keyword id="KW-0694">RNA-binding</keyword>
<keyword id="KW-0699">rRNA-binding</keyword>
<gene>
    <name evidence="1" type="primary">rplN</name>
    <name evidence="1" type="synonym">rpl14</name>
</gene>
<comment type="function">
    <text evidence="1">Binds to 23S rRNA. Forms part of two intersubunit bridges in the 70S ribosome.</text>
</comment>
<comment type="subunit">
    <text evidence="1">Part of the 50S ribosomal subunit. Forms a cluster with proteins L3 and L19. In the 70S ribosome, L14 and L19 interact and together make contacts with the 16S rRNA in bridges B5 and B8.</text>
</comment>
<comment type="similarity">
    <text evidence="1">Belongs to the universal ribosomal protein uL14 family.</text>
</comment>
<proteinExistence type="inferred from homology"/>
<evidence type="ECO:0000255" key="1">
    <source>
        <dbReference type="HAMAP-Rule" id="MF_01367"/>
    </source>
</evidence>
<evidence type="ECO:0000305" key="2"/>
<dbReference type="EMBL" id="AF040101">
    <property type="protein sequence ID" value="AAD08793.1"/>
    <property type="molecule type" value="Genomic_DNA"/>
</dbReference>
<dbReference type="SMR" id="Q9ZI42"/>
<dbReference type="GO" id="GO:0022625">
    <property type="term" value="C:cytosolic large ribosomal subunit"/>
    <property type="evidence" value="ECO:0007669"/>
    <property type="project" value="TreeGrafter"/>
</dbReference>
<dbReference type="GO" id="GO:0070180">
    <property type="term" value="F:large ribosomal subunit rRNA binding"/>
    <property type="evidence" value="ECO:0007669"/>
    <property type="project" value="TreeGrafter"/>
</dbReference>
<dbReference type="GO" id="GO:0003735">
    <property type="term" value="F:structural constituent of ribosome"/>
    <property type="evidence" value="ECO:0007669"/>
    <property type="project" value="InterPro"/>
</dbReference>
<dbReference type="GO" id="GO:0006412">
    <property type="term" value="P:translation"/>
    <property type="evidence" value="ECO:0007669"/>
    <property type="project" value="UniProtKB-UniRule"/>
</dbReference>
<dbReference type="CDD" id="cd00337">
    <property type="entry name" value="Ribosomal_uL14"/>
    <property type="match status" value="1"/>
</dbReference>
<dbReference type="FunFam" id="2.40.150.20:FF:000005">
    <property type="entry name" value="50S ribosomal protein L14"/>
    <property type="match status" value="1"/>
</dbReference>
<dbReference type="Gene3D" id="2.40.150.20">
    <property type="entry name" value="Ribosomal protein L14"/>
    <property type="match status" value="1"/>
</dbReference>
<dbReference type="HAMAP" id="MF_01367">
    <property type="entry name" value="Ribosomal_uL14"/>
    <property type="match status" value="1"/>
</dbReference>
<dbReference type="InterPro" id="IPR000218">
    <property type="entry name" value="Ribosomal_uL14"/>
</dbReference>
<dbReference type="InterPro" id="IPR005745">
    <property type="entry name" value="Ribosomal_uL14_bac-type"/>
</dbReference>
<dbReference type="InterPro" id="IPR019972">
    <property type="entry name" value="Ribosomal_uL14_CS"/>
</dbReference>
<dbReference type="InterPro" id="IPR036853">
    <property type="entry name" value="Ribosomal_uL14_sf"/>
</dbReference>
<dbReference type="NCBIfam" id="TIGR01067">
    <property type="entry name" value="rplN_bact"/>
    <property type="match status" value="1"/>
</dbReference>
<dbReference type="PANTHER" id="PTHR11761">
    <property type="entry name" value="50S/60S RIBOSOMAL PROTEIN L14/L23"/>
    <property type="match status" value="1"/>
</dbReference>
<dbReference type="PANTHER" id="PTHR11761:SF3">
    <property type="entry name" value="LARGE RIBOSOMAL SUBUNIT PROTEIN UL14M"/>
    <property type="match status" value="1"/>
</dbReference>
<dbReference type="Pfam" id="PF00238">
    <property type="entry name" value="Ribosomal_L14"/>
    <property type="match status" value="1"/>
</dbReference>
<dbReference type="SMART" id="SM01374">
    <property type="entry name" value="Ribosomal_L14"/>
    <property type="match status" value="1"/>
</dbReference>
<dbReference type="SUPFAM" id="SSF50193">
    <property type="entry name" value="Ribosomal protein L14"/>
    <property type="match status" value="1"/>
</dbReference>
<dbReference type="PROSITE" id="PS00049">
    <property type="entry name" value="RIBOSOMAL_L14"/>
    <property type="match status" value="1"/>
</dbReference>
<reference key="1">
    <citation type="journal article" date="2000" name="J. Mol. Evol.">
        <title>Phylogenetic depth of the bacterial genera Aquifex and Thermotoga inferred from analysis of ribosomal protein, elongation factor, and RNA polymerase subunit sequences.</title>
        <authorList>
            <person name="Bocchetta M."/>
            <person name="Gribaldo S."/>
            <person name="Sanangelantoni A.M."/>
            <person name="Cammarano P."/>
        </authorList>
    </citation>
    <scope>NUCLEOTIDE SEQUENCE [GENOMIC DNA]</scope>
    <source>
        <strain>DSM 6858 / JCM 9492 / Kol5A</strain>
    </source>
</reference>
<name>RL14_AQUPY</name>
<protein>
    <recommendedName>
        <fullName evidence="1">Large ribosomal subunit protein uL14</fullName>
    </recommendedName>
    <alternativeName>
        <fullName evidence="2">50S ribosomal protein L14</fullName>
    </alternativeName>
</protein>
<accession>Q9ZI42</accession>